<accession>P0DJJ0</accession>
<keyword id="KW-0175">Coiled coil</keyword>
<keyword id="KW-0524">Neurogenesis</keyword>
<keyword id="KW-1267">Proteomics identification</keyword>
<keyword id="KW-1185">Reference proteome</keyword>
<sequence>MTSPAKFKKDKEIIAEYDTQVKEIRAQLTEQMKCLDQQCELRVQLLQDLQDFFRKKAEIEMDYSRNLEKLAEHFLAKTRSTKDQQFKKDQNVLSPVNCWNLLLNQVKWESRDHTTLSDIYLNNIIPRFVQVSEDSGRLFKKSKEVGQQLQDDLMKVLNELYSVMKTYHMYNADSISAQSKLKEAEKQEEKQIGKSVKQEDRQTPCSPDSTANVRIEEKHVRRSSVKKIEKMKEKHQAKYTENKLKAIKAQNEYLLALEATNASVFKYYIHDLSDLIDQCCDLGYHASLNRALRTFLSAELNLEQSKHEGLDAIENAVENLDATSDKQRLMEMYNNVFCPPMKFEFQPHMGDMASQLCAQQPVQSELVQRCQQLQSRLSTLKIENEEVKKTMEATLQTIQDIVTVEDFDVSDCFQYSNSMESVKSTVSETFMSKPSIAKRRANQQETEQFYFTVRECYGF</sequence>
<dbReference type="EMBL" id="AC243994">
    <property type="status" value="NOT_ANNOTATED_CDS"/>
    <property type="molecule type" value="Genomic_DNA"/>
</dbReference>
<dbReference type="EMBL" id="AC244021">
    <property type="status" value="NOT_ANNOTATED_CDS"/>
    <property type="molecule type" value="Genomic_DNA"/>
</dbReference>
<dbReference type="EMBL" id="AC244453">
    <property type="status" value="NOT_ANNOTATED_CDS"/>
    <property type="molecule type" value="Genomic_DNA"/>
</dbReference>
<dbReference type="EMBL" id="BC112927">
    <property type="status" value="NOT_ANNOTATED_CDS"/>
    <property type="molecule type" value="mRNA"/>
</dbReference>
<dbReference type="CCDS" id="CCDS81364.1"/>
<dbReference type="RefSeq" id="NP_001316913.1">
    <property type="nucleotide sequence ID" value="NM_001329984.2"/>
</dbReference>
<dbReference type="SMR" id="P0DJJ0"/>
<dbReference type="BioGRID" id="575800">
    <property type="interactions" value="2"/>
</dbReference>
<dbReference type="FunCoup" id="P0DJJ0">
    <property type="interactions" value="1"/>
</dbReference>
<dbReference type="IntAct" id="P0DJJ0">
    <property type="interactions" value="1"/>
</dbReference>
<dbReference type="STRING" id="9606.ENSP00000478290"/>
<dbReference type="iPTMnet" id="P0DJJ0"/>
<dbReference type="PhosphoSitePlus" id="P0DJJ0"/>
<dbReference type="BioMuta" id="SRGAP2C"/>
<dbReference type="DMDM" id="395455176"/>
<dbReference type="jPOST" id="P0DJJ0"/>
<dbReference type="MassIVE" id="P0DJJ0"/>
<dbReference type="PaxDb" id="9606-ENSP00000478290"/>
<dbReference type="PeptideAtlas" id="P0DJJ0"/>
<dbReference type="ProteomicsDB" id="52551"/>
<dbReference type="Antibodypedia" id="77326">
    <property type="antibodies" value="25 antibodies from 5 providers"/>
</dbReference>
<dbReference type="DNASU" id="653464"/>
<dbReference type="Ensembl" id="ENST00000367123.8">
    <property type="protein sequence ID" value="ENSP00000478290.1"/>
    <property type="gene ID" value="ENSG00000171943.12"/>
</dbReference>
<dbReference type="GeneID" id="653464"/>
<dbReference type="KEGG" id="hsa:653464"/>
<dbReference type="MANE-Select" id="ENST00000367123.8">
    <property type="protein sequence ID" value="ENSP00000478290.1"/>
    <property type="RefSeq nucleotide sequence ID" value="NM_001329984.2"/>
    <property type="RefSeq protein sequence ID" value="NP_001316913.1"/>
</dbReference>
<dbReference type="UCSC" id="uc057jxs.1">
    <property type="organism name" value="human"/>
</dbReference>
<dbReference type="AGR" id="HGNC:30584"/>
<dbReference type="CTD" id="653464"/>
<dbReference type="DisGeNET" id="653464"/>
<dbReference type="GeneCards" id="SRGAP2C"/>
<dbReference type="HGNC" id="HGNC:30584">
    <property type="gene designation" value="SRGAP2C"/>
</dbReference>
<dbReference type="HPA" id="ENSG00000171943">
    <property type="expression patterns" value="Tissue enhanced (brain)"/>
</dbReference>
<dbReference type="MIM" id="614704">
    <property type="type" value="gene"/>
</dbReference>
<dbReference type="neXtProt" id="NX_P0DJJ0"/>
<dbReference type="OpenTargets" id="ENSG00000171943"/>
<dbReference type="VEuPathDB" id="HostDB:ENSG00000171943"/>
<dbReference type="eggNOG" id="KOG3565">
    <property type="taxonomic scope" value="Eukaryota"/>
</dbReference>
<dbReference type="GeneTree" id="ENSGT00950000182824"/>
<dbReference type="HOGENOM" id="CLU_005715_1_0_1"/>
<dbReference type="InParanoid" id="P0DJJ0"/>
<dbReference type="OMA" id="KCTRARN"/>
<dbReference type="OrthoDB" id="9519756at2759"/>
<dbReference type="PAN-GO" id="P0DJJ0">
    <property type="GO annotations" value="2 GO annotations based on evolutionary models"/>
</dbReference>
<dbReference type="PathwayCommons" id="P0DJJ0"/>
<dbReference type="SignaLink" id="P0DJJ0"/>
<dbReference type="BioGRID-ORCS" id="653464">
    <property type="hits" value="21 hits in 174 CRISPR screens"/>
</dbReference>
<dbReference type="ChiTaRS" id="SRGAP2C">
    <property type="organism name" value="human"/>
</dbReference>
<dbReference type="GeneWiki" id="SRGAP2C"/>
<dbReference type="GenomeRNAi" id="653464"/>
<dbReference type="Pharos" id="P0DJJ0">
    <property type="development level" value="Tbio"/>
</dbReference>
<dbReference type="PRO" id="PR:P0DJJ0"/>
<dbReference type="Proteomes" id="UP000005640">
    <property type="component" value="Chromosome 1"/>
</dbReference>
<dbReference type="RNAct" id="P0DJJ0">
    <property type="molecule type" value="protein"/>
</dbReference>
<dbReference type="Bgee" id="ENSG00000171943">
    <property type="expression patterns" value="Expressed in ventricular zone and 110 other cell types or tissues"/>
</dbReference>
<dbReference type="ExpressionAtlas" id="P0DJJ0">
    <property type="expression patterns" value="baseline and differential"/>
</dbReference>
<dbReference type="GO" id="GO:0005737">
    <property type="term" value="C:cytoplasm"/>
    <property type="evidence" value="ECO:0000318"/>
    <property type="project" value="GO_Central"/>
</dbReference>
<dbReference type="GO" id="GO:0098978">
    <property type="term" value="C:glutamatergic synapse"/>
    <property type="evidence" value="ECO:0000314"/>
    <property type="project" value="SynGO"/>
</dbReference>
<dbReference type="GO" id="GO:0046982">
    <property type="term" value="F:protein heterodimerization activity"/>
    <property type="evidence" value="ECO:0000353"/>
    <property type="project" value="UniProtKB"/>
</dbReference>
<dbReference type="GO" id="GO:0042803">
    <property type="term" value="F:protein homodimerization activity"/>
    <property type="evidence" value="ECO:0000353"/>
    <property type="project" value="UniProtKB"/>
</dbReference>
<dbReference type="GO" id="GO:0021987">
    <property type="term" value="P:cerebral cortex development"/>
    <property type="evidence" value="ECO:0000314"/>
    <property type="project" value="UniProtKB"/>
</dbReference>
<dbReference type="GO" id="GO:1904861">
    <property type="term" value="P:excitatory synapse assembly"/>
    <property type="evidence" value="ECO:0000314"/>
    <property type="project" value="UniProtKB"/>
</dbReference>
<dbReference type="GO" id="GO:0021816">
    <property type="term" value="P:extension of a leading process involved in cell motility in cerebral cortex radial glia guided migration"/>
    <property type="evidence" value="ECO:0000314"/>
    <property type="project" value="UniProtKB"/>
</dbReference>
<dbReference type="GO" id="GO:1904862">
    <property type="term" value="P:inhibitory synapse assembly"/>
    <property type="evidence" value="ECO:0000314"/>
    <property type="project" value="UniProtKB"/>
</dbReference>
<dbReference type="GO" id="GO:0030336">
    <property type="term" value="P:negative regulation of cell migration"/>
    <property type="evidence" value="ECO:0000318"/>
    <property type="project" value="GO_Central"/>
</dbReference>
<dbReference type="GO" id="GO:0061000">
    <property type="term" value="P:negative regulation of dendritic spine development"/>
    <property type="evidence" value="ECO:0000314"/>
    <property type="project" value="UniProtKB"/>
</dbReference>
<dbReference type="GO" id="GO:0051490">
    <property type="term" value="P:negative regulation of filopodium assembly"/>
    <property type="evidence" value="ECO:0000314"/>
    <property type="project" value="UniProtKB"/>
</dbReference>
<dbReference type="GO" id="GO:2001224">
    <property type="term" value="P:positive regulation of neuron migration"/>
    <property type="evidence" value="ECO:0000314"/>
    <property type="project" value="UniProtKB"/>
</dbReference>
<dbReference type="GO" id="GO:0051963">
    <property type="term" value="P:regulation of synapse assembly"/>
    <property type="evidence" value="ECO:0000314"/>
    <property type="project" value="SynGO"/>
</dbReference>
<dbReference type="FunFam" id="1.20.1270.60:FF:000006">
    <property type="entry name" value="SLIT-ROBO Rho GTPase-activating protein 1 isoform 2"/>
    <property type="match status" value="1"/>
</dbReference>
<dbReference type="Gene3D" id="1.20.1270.60">
    <property type="entry name" value="Arfaptin homology (AH) domain/BAR domain"/>
    <property type="match status" value="1"/>
</dbReference>
<dbReference type="InterPro" id="IPR027267">
    <property type="entry name" value="AH/BAR_dom_sf"/>
</dbReference>
<dbReference type="InterPro" id="IPR031160">
    <property type="entry name" value="F_BAR"/>
</dbReference>
<dbReference type="InterPro" id="IPR001060">
    <property type="entry name" value="FCH_dom"/>
</dbReference>
<dbReference type="InterPro" id="IPR051627">
    <property type="entry name" value="SLIT-ROBO_RhoGAP"/>
</dbReference>
<dbReference type="PANTHER" id="PTHR14166">
    <property type="entry name" value="SLIT-ROBO RHO GTPASE ACTIVATING PROTEIN"/>
    <property type="match status" value="1"/>
</dbReference>
<dbReference type="Pfam" id="PF00611">
    <property type="entry name" value="FCH"/>
    <property type="match status" value="1"/>
</dbReference>
<dbReference type="SMART" id="SM00055">
    <property type="entry name" value="FCH"/>
    <property type="match status" value="1"/>
</dbReference>
<dbReference type="SUPFAM" id="SSF103657">
    <property type="entry name" value="BAR/IMD domain-like"/>
    <property type="match status" value="1"/>
</dbReference>
<dbReference type="PROSITE" id="PS51741">
    <property type="entry name" value="F_BAR"/>
    <property type="match status" value="1"/>
</dbReference>
<feature type="chain" id="PRO_0000418193" description="SLIT-ROBO Rho GTPase-activating protein 2C">
    <location>
        <begin position="1"/>
        <end position="459"/>
    </location>
</feature>
<feature type="domain" description="F-BAR" evidence="2">
    <location>
        <begin position="22"/>
        <end position="325"/>
    </location>
</feature>
<feature type="region of interest" description="Disordered" evidence="3">
    <location>
        <begin position="181"/>
        <end position="211"/>
    </location>
</feature>
<feature type="coiled-coil region" evidence="1">
    <location>
        <begin position="363"/>
        <end position="401"/>
    </location>
</feature>
<feature type="compositionally biased region" description="Basic and acidic residues" evidence="3">
    <location>
        <begin position="181"/>
        <end position="202"/>
    </location>
</feature>
<feature type="mutagenesis site" description="Does not improve solubility; when associated with R-108, R-205, R-235 and R-250." evidence="7">
    <original>H</original>
    <variation>R</variation>
    <location>
        <position position="73"/>
    </location>
</feature>
<feature type="mutagenesis site" description="Does not improve solubility; when associated with R-73, R-205, R-235 and R-250." evidence="7">
    <original>W</original>
    <variation>R</variation>
    <location>
        <position position="108"/>
    </location>
</feature>
<feature type="mutagenesis site" description="Does not improve solubility; when associated with R-73, R-108, R-235 and R-250." evidence="7">
    <original>C</original>
    <variation>R</variation>
    <location>
        <position position="205"/>
    </location>
</feature>
<feature type="mutagenesis site" description="Does not improve solubility; when associated with R-73, R-108, R-205 and R-250." evidence="7">
    <original>H</original>
    <variation>R</variation>
    <location>
        <position position="235"/>
    </location>
</feature>
<feature type="mutagenesis site" description="Does not improve solubility; when associated with R-73, R-108, R-205 and R-235." evidence="7">
    <original>Q</original>
    <variation>R</variation>
    <location>
        <position position="250"/>
    </location>
</feature>
<feature type="sequence conflict" description="In Ref. 3; BC112927." evidence="11" ref="3">
    <location>
        <position position="278"/>
    </location>
</feature>
<protein>
    <recommendedName>
        <fullName evidence="10">SLIT-ROBO Rho GTPase-activating protein 2C</fullName>
    </recommendedName>
    <alternativeName>
        <fullName>SLIT-ROBO Rho GTPase activating protein 2 pseudogene 1</fullName>
    </alternativeName>
</protein>
<comment type="function">
    <text evidence="5 6 7 8 9">Human-specific protein that acts as a key modifier of cortical connectivity in the human brain (PubMed:22559944, PubMed:27373832, PubMed:34707291). Acts by inhibiting the functions of ancestral paralog SRGAP2/SRGAP2A, a postsynaptic protein that regulates excitatory and inhibitory synapse maturation and density in cortical pyramidal neurons (PubMed:22559944, PubMed:27373832). SRGAP2C is unstable but is able to heterodimerize with SRGAP2/SRGAP2A, thereby reducing SRGAP2/SRGAP2A levels through proteasome-dependent degradation (PubMed:27373832, PubMed:28333212, PubMed:31822692). Inhibition of SRGAP2/SRGAP2A by SRGAP2C leads to an increase in synaptic density and protracted synaptic maturation of both excitatory and inhibitory synapses (PubMed:27373832, PubMed:34707291). Modifies cortical circuit connectivity by increasing the number of local and long-range cortical inputs received by layer 2/3 pyramidal neurons (PubMed:34707291). Also able to increase the probability of sensory-evoked responses by layer 2/3 pyramidal neurons (PubMed:34707291).</text>
</comment>
<comment type="subunit">
    <text evidence="5 7 9">Homodimer (PubMed:22559944). Interacts (via F-BAR domain) with SRGAP2/SRGAP2A (via F-BAR domain); formation of the heterodimer inhibits SRGAP2/SRGAP2A function (PubMed:22559944, PubMed:28333212, PubMed:34707291).</text>
</comment>
<comment type="tissue specificity">
    <text evidence="4 5">Ubiquitously expressed with higher expression in cerebellum (PubMed:22559943, PubMed:22559944). Probably expressed in fetal and adult neurons (at protein level) (PubMed:22559943).</text>
</comment>
<comment type="domain">
    <text evidence="7">SRGAP2C is truncated at its C-terminus compared to SRGAP2/SRGAP2A (PubMed:28333212). It only contains an extended F-BAR domain that lacks the last C-terminal 49 amino acids of SRGAP2/SRGAP2A, which are replaced with seven unique C-terminal amino acids (PubMed:28333212). In addition, SRGAP2C acquired a series of unique nonsynonymous base pair mutations selectively targeting five arginine residues compared to SRGAP2B (PubMed:28333212). This truncation and these specific arginine mutations reduce solubility of SRGAP2C and increase its ability to heterodimerize with SRGAP2/SRGAP2A to form an insoluble complex (PubMed:28333212).</text>
</comment>
<comment type="miscellaneous">
    <text evidence="4 5 9">This is one of the 3 duplications of the ancestral gene SRGAP2/SRGAP2A which has undergone human-specific segmental gene duplications (PubMed:22559943, PubMed:22559944). The appearance of SRGAP2C in the human genome is estimated to 2,4 million years and corresponds to the beginning of neocortex expansion in human evolution (PubMed:22559943, PubMed:22559944, PubMed:34707291). The emergence of SRGAP2C at the birth of the Homo lineage probably contributed to the evolution of specific structural and functional features of cortical circuits in the human cortex (PubMed:34707291).</text>
</comment>
<comment type="miscellaneous">
    <text evidence="5 6 9">Expression of SRGAP2C in mouse cortical pyramidal neurons leads to the emergence of human-specific traits of synaptic development, characterized by increases in the density of both excitatory and inhibitory synapses received by layer 2/3 pyramidal neurons and neotenic features of excitatory and inhibitory synaptic development (PubMed:22559944, PubMed:27373832, PubMed:34707291). Mice humanized for SRGAP2C expression in all cortical pyramidal neurons show a shift in the fraction of layer 2/3 pyramidal neurons activated by sensory stimulation and an enhanced ability to learn a cortex-dependent sensory-discrimination task (PubMed:34707291).</text>
</comment>
<evidence type="ECO:0000255" key="1"/>
<evidence type="ECO:0000255" key="2">
    <source>
        <dbReference type="PROSITE-ProRule" id="PRU01077"/>
    </source>
</evidence>
<evidence type="ECO:0000256" key="3">
    <source>
        <dbReference type="SAM" id="MobiDB-lite"/>
    </source>
</evidence>
<evidence type="ECO:0000269" key="4">
    <source>
    </source>
</evidence>
<evidence type="ECO:0000269" key="5">
    <source>
    </source>
</evidence>
<evidence type="ECO:0000269" key="6">
    <source>
    </source>
</evidence>
<evidence type="ECO:0000269" key="7">
    <source>
    </source>
</evidence>
<evidence type="ECO:0000269" key="8">
    <source>
    </source>
</evidence>
<evidence type="ECO:0000269" key="9">
    <source>
    </source>
</evidence>
<evidence type="ECO:0000303" key="10">
    <source>
    </source>
</evidence>
<evidence type="ECO:0000305" key="11"/>
<evidence type="ECO:0000312" key="12">
    <source>
        <dbReference type="HGNC" id="HGNC:30584"/>
    </source>
</evidence>
<proteinExistence type="evidence at protein level"/>
<organism>
    <name type="scientific">Homo sapiens</name>
    <name type="common">Human</name>
    <dbReference type="NCBI Taxonomy" id="9606"/>
    <lineage>
        <taxon>Eukaryota</taxon>
        <taxon>Metazoa</taxon>
        <taxon>Chordata</taxon>
        <taxon>Craniata</taxon>
        <taxon>Vertebrata</taxon>
        <taxon>Euteleostomi</taxon>
        <taxon>Mammalia</taxon>
        <taxon>Eutheria</taxon>
        <taxon>Euarchontoglires</taxon>
        <taxon>Primates</taxon>
        <taxon>Haplorrhini</taxon>
        <taxon>Catarrhini</taxon>
        <taxon>Hominidae</taxon>
        <taxon>Homo</taxon>
    </lineage>
</organism>
<name>SRG2C_HUMAN</name>
<reference key="1">
    <citation type="journal article" date="2012" name="Cell">
        <title>Inhibition of SRGAP2 function by its human-specific paralogs induces neoteny during spine maturation.</title>
        <authorList>
            <person name="Charrier C."/>
            <person name="Joshi K."/>
            <person name="Coutinho-Budd J."/>
            <person name="Kim J.E."/>
            <person name="Lambert N."/>
            <person name="de Marchena J."/>
            <person name="Jin W.L."/>
            <person name="Vanderhaeghen P."/>
            <person name="Ghosh A."/>
            <person name="Sassa T."/>
            <person name="Polleux F."/>
        </authorList>
    </citation>
    <scope>NUCLEOTIDE SEQUENCE [MRNA]</scope>
    <scope>FUNCTION</scope>
    <scope>TISSUE SPECIFICITY</scope>
    <scope>HOMODIMERIZATION</scope>
    <scope>INTERACTION WITH SRGAP2</scope>
</reference>
<reference key="2">
    <citation type="journal article" date="2006" name="Nature">
        <title>The DNA sequence and biological annotation of human chromosome 1.</title>
        <authorList>
            <person name="Gregory S.G."/>
            <person name="Barlow K.F."/>
            <person name="McLay K.E."/>
            <person name="Kaul R."/>
            <person name="Swarbreck D."/>
            <person name="Dunham A."/>
            <person name="Scott C.E."/>
            <person name="Howe K.L."/>
            <person name="Woodfine K."/>
            <person name="Spencer C.C.A."/>
            <person name="Jones M.C."/>
            <person name="Gillson C."/>
            <person name="Searle S."/>
            <person name="Zhou Y."/>
            <person name="Kokocinski F."/>
            <person name="McDonald L."/>
            <person name="Evans R."/>
            <person name="Phillips K."/>
            <person name="Atkinson A."/>
            <person name="Cooper R."/>
            <person name="Jones C."/>
            <person name="Hall R.E."/>
            <person name="Andrews T.D."/>
            <person name="Lloyd C."/>
            <person name="Ainscough R."/>
            <person name="Almeida J.P."/>
            <person name="Ambrose K.D."/>
            <person name="Anderson F."/>
            <person name="Andrew R.W."/>
            <person name="Ashwell R.I.S."/>
            <person name="Aubin K."/>
            <person name="Babbage A.K."/>
            <person name="Bagguley C.L."/>
            <person name="Bailey J."/>
            <person name="Beasley H."/>
            <person name="Bethel G."/>
            <person name="Bird C.P."/>
            <person name="Bray-Allen S."/>
            <person name="Brown J.Y."/>
            <person name="Brown A.J."/>
            <person name="Buckley D."/>
            <person name="Burton J."/>
            <person name="Bye J."/>
            <person name="Carder C."/>
            <person name="Chapman J.C."/>
            <person name="Clark S.Y."/>
            <person name="Clarke G."/>
            <person name="Clee C."/>
            <person name="Cobley V."/>
            <person name="Collier R.E."/>
            <person name="Corby N."/>
            <person name="Coville G.J."/>
            <person name="Davies J."/>
            <person name="Deadman R."/>
            <person name="Dunn M."/>
            <person name="Earthrowl M."/>
            <person name="Ellington A.G."/>
            <person name="Errington H."/>
            <person name="Frankish A."/>
            <person name="Frankland J."/>
            <person name="French L."/>
            <person name="Garner P."/>
            <person name="Garnett J."/>
            <person name="Gay L."/>
            <person name="Ghori M.R.J."/>
            <person name="Gibson R."/>
            <person name="Gilby L.M."/>
            <person name="Gillett W."/>
            <person name="Glithero R.J."/>
            <person name="Grafham D.V."/>
            <person name="Griffiths C."/>
            <person name="Griffiths-Jones S."/>
            <person name="Grocock R."/>
            <person name="Hammond S."/>
            <person name="Harrison E.S.I."/>
            <person name="Hart E."/>
            <person name="Haugen E."/>
            <person name="Heath P.D."/>
            <person name="Holmes S."/>
            <person name="Holt K."/>
            <person name="Howden P.J."/>
            <person name="Hunt A.R."/>
            <person name="Hunt S.E."/>
            <person name="Hunter G."/>
            <person name="Isherwood J."/>
            <person name="James R."/>
            <person name="Johnson C."/>
            <person name="Johnson D."/>
            <person name="Joy A."/>
            <person name="Kay M."/>
            <person name="Kershaw J.K."/>
            <person name="Kibukawa M."/>
            <person name="Kimberley A.M."/>
            <person name="King A."/>
            <person name="Knights A.J."/>
            <person name="Lad H."/>
            <person name="Laird G."/>
            <person name="Lawlor S."/>
            <person name="Leongamornlert D.A."/>
            <person name="Lloyd D.M."/>
            <person name="Loveland J."/>
            <person name="Lovell J."/>
            <person name="Lush M.J."/>
            <person name="Lyne R."/>
            <person name="Martin S."/>
            <person name="Mashreghi-Mohammadi M."/>
            <person name="Matthews L."/>
            <person name="Matthews N.S.W."/>
            <person name="McLaren S."/>
            <person name="Milne S."/>
            <person name="Mistry S."/>
            <person name="Moore M.J.F."/>
            <person name="Nickerson T."/>
            <person name="O'Dell C.N."/>
            <person name="Oliver K."/>
            <person name="Palmeiri A."/>
            <person name="Palmer S.A."/>
            <person name="Parker A."/>
            <person name="Patel D."/>
            <person name="Pearce A.V."/>
            <person name="Peck A.I."/>
            <person name="Pelan S."/>
            <person name="Phelps K."/>
            <person name="Phillimore B.J."/>
            <person name="Plumb R."/>
            <person name="Rajan J."/>
            <person name="Raymond C."/>
            <person name="Rouse G."/>
            <person name="Saenphimmachak C."/>
            <person name="Sehra H.K."/>
            <person name="Sheridan E."/>
            <person name="Shownkeen R."/>
            <person name="Sims S."/>
            <person name="Skuce C.D."/>
            <person name="Smith M."/>
            <person name="Steward C."/>
            <person name="Subramanian S."/>
            <person name="Sycamore N."/>
            <person name="Tracey A."/>
            <person name="Tromans A."/>
            <person name="Van Helmond Z."/>
            <person name="Wall M."/>
            <person name="Wallis J.M."/>
            <person name="White S."/>
            <person name="Whitehead S.L."/>
            <person name="Wilkinson J.E."/>
            <person name="Willey D.L."/>
            <person name="Williams H."/>
            <person name="Wilming L."/>
            <person name="Wray P.W."/>
            <person name="Wu Z."/>
            <person name="Coulson A."/>
            <person name="Vaudin M."/>
            <person name="Sulston J.E."/>
            <person name="Durbin R.M."/>
            <person name="Hubbard T."/>
            <person name="Wooster R."/>
            <person name="Dunham I."/>
            <person name="Carter N.P."/>
            <person name="McVean G."/>
            <person name="Ross M.T."/>
            <person name="Harrow J."/>
            <person name="Olson M.V."/>
            <person name="Beck S."/>
            <person name="Rogers J."/>
            <person name="Bentley D.R."/>
        </authorList>
    </citation>
    <scope>NUCLEOTIDE SEQUENCE [LARGE SCALE GENOMIC DNA]</scope>
</reference>
<reference key="3">
    <citation type="journal article" date="2004" name="Genome Res.">
        <title>The status, quality, and expansion of the NIH full-length cDNA project: the Mammalian Gene Collection (MGC).</title>
        <authorList>
            <consortium name="The MGC Project Team"/>
        </authorList>
    </citation>
    <scope>NUCLEOTIDE SEQUENCE [LARGE SCALE MRNA]</scope>
    <source>
        <tissue>Mammary carcinoma</tissue>
    </source>
</reference>
<reference key="4">
    <citation type="journal article" date="2012" name="Cell">
        <title>Evolution of human-specific neural SRGAP2 genes by incomplete segmental duplication.</title>
        <authorList>
            <person name="Dennis M.Y."/>
            <person name="Nuttle X."/>
            <person name="Sudmant P.H."/>
            <person name="Antonacci F."/>
            <person name="Graves T.A."/>
            <person name="Nefedov M."/>
            <person name="Rosenfeld J.A."/>
            <person name="Sajjadian S."/>
            <person name="Malig M."/>
            <person name="Kotkiewicz H."/>
            <person name="Curry C.J."/>
            <person name="Shafer S."/>
            <person name="Shaffer L.G."/>
            <person name="de Jong P.J."/>
            <person name="Wilson R.K."/>
            <person name="Eichler E.E."/>
        </authorList>
    </citation>
    <scope>IDENTIFICATION</scope>
    <scope>CHROMOSOMAL LOCATION</scope>
    <scope>TISSUE SPECIFICITY</scope>
</reference>
<reference key="5">
    <citation type="journal article" date="2016" name="Neuron">
        <title>SRGAP2 and its human-specific paralog co-regulate the development of excitatory and inhibitory synapses.</title>
        <authorList>
            <person name="Fossati M."/>
            <person name="Pizzarelli R."/>
            <person name="Schmidt E.R."/>
            <person name="Kupferman J.V."/>
            <person name="Stroebel D."/>
            <person name="Polleux F."/>
            <person name="Charrier C."/>
        </authorList>
    </citation>
    <scope>FUNCTION</scope>
</reference>
<reference key="6">
    <citation type="journal article" date="2017" name="Mol. Biol. Evol.">
        <title>Structural history of human SRGAP2 proteins.</title>
        <authorList>
            <person name="Sporny M."/>
            <person name="Guez-Haddad J."/>
            <person name="Kreusch A."/>
            <person name="Shakartzi S."/>
            <person name="Neznansky A."/>
            <person name="Cross A."/>
            <person name="Isupov M.N."/>
            <person name="Qualmann B."/>
            <person name="Kessels M.M."/>
            <person name="Opatowsky Y."/>
        </authorList>
    </citation>
    <scope>FUNCTION</scope>
    <scope>DOMAIN</scope>
    <scope>INTERACTION WITH SRGAP2</scope>
    <scope>MUTAGENESIS OF HIS-73; TRP-108; CYS-205; HIS-235 AND GLN-250</scope>
</reference>
<reference key="7">
    <citation type="journal article" date="2017" name="Nat. Ecol. Evol.">
        <title>The evolution and population diversity of human-specific segmental duplications.</title>
        <authorList>
            <person name="Dennis M.Y."/>
            <person name="Harshman L."/>
            <person name="Nelson B.J."/>
            <person name="Penn O."/>
            <person name="Cantsilieris S."/>
            <person name="Huddleston J."/>
            <person name="Antonacci F."/>
            <person name="Penewit K."/>
            <person name="Denman L."/>
            <person name="Raja A."/>
            <person name="Baker C."/>
            <person name="Mark K."/>
            <person name="Malig M."/>
            <person name="Janke N."/>
            <person name="Espinoza C."/>
            <person name="Stessman H.A.F."/>
            <person name="Nuttle X."/>
            <person name="Hoekzema K."/>
            <person name="Lindsay-Graves T.A."/>
            <person name="Wilson R.K."/>
            <person name="Eichler E.E."/>
        </authorList>
    </citation>
    <scope>IDENTIFICATION</scope>
</reference>
<reference key="8">
    <citation type="journal article" date="2019" name="Sci. Rep.">
        <title>The human-specific paralogs SRGAP2B and SRGAP2C differentially modulate SRGAP2A-dependent synaptic development.</title>
        <authorList>
            <person name="Schmidt E.R.E."/>
            <person name="Kupferman J.V."/>
            <person name="Stackmann M."/>
            <person name="Polleux F."/>
        </authorList>
    </citation>
    <scope>FUNCTION</scope>
    <scope>INTERACTION WITH SRGAP2</scope>
</reference>
<reference key="9">
    <citation type="journal article" date="2021" name="Nature">
        <title>A human-specific modifier of cortical connectivity and circuit function.</title>
        <authorList>
            <person name="Schmidt E.R.E."/>
            <person name="Zhao H.T."/>
            <person name="Park J.M."/>
            <person name="Dipoppa M."/>
            <person name="Monsalve-Mercado M.M."/>
            <person name="Dahan J.B."/>
            <person name="Rodgers C.C."/>
            <person name="Lejeune A."/>
            <person name="Hillman E.M.C."/>
            <person name="Miller K.D."/>
            <person name="Bruno R.M."/>
            <person name="Polleux F."/>
        </authorList>
    </citation>
    <scope>FUNCTION</scope>
</reference>
<gene>
    <name evidence="10 12" type="primary">SRGAP2C</name>
    <name evidence="12" type="synonym">SRGAP2P1</name>
</gene>